<gene>
    <name evidence="2" type="primary">infB</name>
    <name type="ordered locus">SMU_421</name>
</gene>
<sequence>MSKKRLYEIAKEIGKESKEIVEKAKSLGLEVKSHASSVEESDAKRIVESFTVSVEPKAVTPTSKVEKEAKAQEGSVAAEPKAAATKPAGRPRPQNRNFKAEREARAKAEAERRQNNGERRNQNKGQNNRQKDNRNHGSQDRRNDNRNNRNRQNDNRRDNRNHFQNRQEASKSQPTGPRFDFKARAAALKAEQNAEYSRQSETRFHEAQEAKRQAAQAKEKAKKLNQKEQPTVEAAATAAPQAQPQTVEQVTHPAAVDTRRKKQARPDKSRDFSHENEDGPKQNKHKKNRNKQNQVRNQKNSNWNKKNKKSKNNRNHNANLKPVTERKFHELPKEFEYTEGMTVAEIAKRIKREPAEIVKKLFMMGVMATQNQSLDADTIELLMVDYGIEAHQKVEVDTADIERFFVEDDYLNPKNMVERAPVVTIMGHVDHGKTTLLDTLRNSRIATGEAGGITQHIGAYQIEEGGKKITFLDTPGHAAFTSMRARGASVTDITILIVAADDGVMPQTIEAINHSKAADVPIIVAINKIDKPGANPERVIGELAEYGVISTAWGGDSEFVEISAKFGQNIEELLETVLLVAEIQELKADPTVRAIGTVIEARLDKGKGAVATLLVQQGTLHVQDPIVVGNTFGRVRAMTNDLGRRVKVAAPSTPVSITGLNEAPMAGDHFAVYEDEKAARAAGEERAKRALLKQRQLTHRVSLDNLFDTLKAGEVKSVNVIIKADVQGSVEALAASLLKIDVEGVKVNVVHSAVGAINESDITLAEASNAVIIGFNVRPTPQARQQAEADEVEIRLHSIIYKVIEEVEDAMKGMLDPEFEEKIIGEALIRETFKVSKVGTIGGFMVTNGKITRDSSARVIRDGVVVFDGKLASLKHYKDDVKEVGNGQEGGLMIENYNDIKIDDTIEAYIMEEIKR</sequence>
<proteinExistence type="inferred from homology"/>
<accession>Q8DVP9</accession>
<organism>
    <name type="scientific">Streptococcus mutans serotype c (strain ATCC 700610 / UA159)</name>
    <dbReference type="NCBI Taxonomy" id="210007"/>
    <lineage>
        <taxon>Bacteria</taxon>
        <taxon>Bacillati</taxon>
        <taxon>Bacillota</taxon>
        <taxon>Bacilli</taxon>
        <taxon>Lactobacillales</taxon>
        <taxon>Streptococcaceae</taxon>
        <taxon>Streptococcus</taxon>
    </lineage>
</organism>
<name>IF2_STRMU</name>
<protein>
    <recommendedName>
        <fullName evidence="2">Translation initiation factor IF-2</fullName>
    </recommendedName>
</protein>
<keyword id="KW-0963">Cytoplasm</keyword>
<keyword id="KW-0342">GTP-binding</keyword>
<keyword id="KW-0396">Initiation factor</keyword>
<keyword id="KW-0547">Nucleotide-binding</keyword>
<keyword id="KW-0648">Protein biosynthesis</keyword>
<keyword id="KW-1185">Reference proteome</keyword>
<comment type="function">
    <text evidence="2">One of the essential components for the initiation of protein synthesis. Protects formylmethionyl-tRNA from spontaneous hydrolysis and promotes its binding to the 30S ribosomal subunits. Also involved in the hydrolysis of GTP during the formation of the 70S ribosomal complex.</text>
</comment>
<comment type="subcellular location">
    <subcellularLocation>
        <location evidence="2">Cytoplasm</location>
    </subcellularLocation>
</comment>
<comment type="similarity">
    <text evidence="2">Belongs to the TRAFAC class translation factor GTPase superfamily. Classic translation factor GTPase family. IF-2 subfamily.</text>
</comment>
<reference key="1">
    <citation type="journal article" date="2002" name="Proc. Natl. Acad. Sci. U.S.A.">
        <title>Genome sequence of Streptococcus mutans UA159, a cariogenic dental pathogen.</title>
        <authorList>
            <person name="Ajdic D.J."/>
            <person name="McShan W.M."/>
            <person name="McLaughlin R.E."/>
            <person name="Savic G."/>
            <person name="Chang J."/>
            <person name="Carson M.B."/>
            <person name="Primeaux C."/>
            <person name="Tian R."/>
            <person name="Kenton S."/>
            <person name="Jia H.G."/>
            <person name="Lin S.P."/>
            <person name="Qian Y."/>
            <person name="Li S."/>
            <person name="Zhu H."/>
            <person name="Najar F.Z."/>
            <person name="Lai H."/>
            <person name="White J."/>
            <person name="Roe B.A."/>
            <person name="Ferretti J.J."/>
        </authorList>
    </citation>
    <scope>NUCLEOTIDE SEQUENCE [LARGE SCALE GENOMIC DNA]</scope>
    <source>
        <strain>ATCC 700610 / UA159</strain>
    </source>
</reference>
<dbReference type="EMBL" id="AE014133">
    <property type="protein sequence ID" value="AAN58175.1"/>
    <property type="molecule type" value="Genomic_DNA"/>
</dbReference>
<dbReference type="RefSeq" id="NP_720869.1">
    <property type="nucleotide sequence ID" value="NC_004350.2"/>
</dbReference>
<dbReference type="RefSeq" id="WP_002262600.1">
    <property type="nucleotide sequence ID" value="NC_004350.2"/>
</dbReference>
<dbReference type="SMR" id="Q8DVP9"/>
<dbReference type="STRING" id="210007.SMU_421"/>
<dbReference type="KEGG" id="smu:SMU_421"/>
<dbReference type="PATRIC" id="fig|210007.7.peg.371"/>
<dbReference type="eggNOG" id="COG0532">
    <property type="taxonomic scope" value="Bacteria"/>
</dbReference>
<dbReference type="HOGENOM" id="CLU_006301_5_0_9"/>
<dbReference type="OrthoDB" id="9811804at2"/>
<dbReference type="PhylomeDB" id="Q8DVP9"/>
<dbReference type="Proteomes" id="UP000002512">
    <property type="component" value="Chromosome"/>
</dbReference>
<dbReference type="GO" id="GO:0005829">
    <property type="term" value="C:cytosol"/>
    <property type="evidence" value="ECO:0007669"/>
    <property type="project" value="TreeGrafter"/>
</dbReference>
<dbReference type="GO" id="GO:0005525">
    <property type="term" value="F:GTP binding"/>
    <property type="evidence" value="ECO:0007669"/>
    <property type="project" value="UniProtKB-KW"/>
</dbReference>
<dbReference type="GO" id="GO:0003924">
    <property type="term" value="F:GTPase activity"/>
    <property type="evidence" value="ECO:0007669"/>
    <property type="project" value="UniProtKB-UniRule"/>
</dbReference>
<dbReference type="GO" id="GO:0003743">
    <property type="term" value="F:translation initiation factor activity"/>
    <property type="evidence" value="ECO:0007669"/>
    <property type="project" value="UniProtKB-UniRule"/>
</dbReference>
<dbReference type="CDD" id="cd01887">
    <property type="entry name" value="IF2_eIF5B"/>
    <property type="match status" value="1"/>
</dbReference>
<dbReference type="CDD" id="cd03702">
    <property type="entry name" value="IF2_mtIF2_II"/>
    <property type="match status" value="1"/>
</dbReference>
<dbReference type="CDD" id="cd03692">
    <property type="entry name" value="mtIF2_IVc"/>
    <property type="match status" value="1"/>
</dbReference>
<dbReference type="FunFam" id="2.40.30.10:FF:000007">
    <property type="entry name" value="Translation initiation factor IF-2"/>
    <property type="match status" value="1"/>
</dbReference>
<dbReference type="FunFam" id="2.40.30.10:FF:000008">
    <property type="entry name" value="Translation initiation factor IF-2"/>
    <property type="match status" value="1"/>
</dbReference>
<dbReference type="FunFam" id="3.40.50.10050:FF:000001">
    <property type="entry name" value="Translation initiation factor IF-2"/>
    <property type="match status" value="1"/>
</dbReference>
<dbReference type="FunFam" id="3.40.50.300:FF:000019">
    <property type="entry name" value="Translation initiation factor IF-2"/>
    <property type="match status" value="1"/>
</dbReference>
<dbReference type="Gene3D" id="1.10.10.2480">
    <property type="match status" value="1"/>
</dbReference>
<dbReference type="Gene3D" id="3.40.50.300">
    <property type="entry name" value="P-loop containing nucleotide triphosphate hydrolases"/>
    <property type="match status" value="1"/>
</dbReference>
<dbReference type="Gene3D" id="2.40.30.10">
    <property type="entry name" value="Translation factors"/>
    <property type="match status" value="2"/>
</dbReference>
<dbReference type="Gene3D" id="3.40.50.10050">
    <property type="entry name" value="Translation initiation factor IF- 2, domain 3"/>
    <property type="match status" value="1"/>
</dbReference>
<dbReference type="HAMAP" id="MF_00100_B">
    <property type="entry name" value="IF_2_B"/>
    <property type="match status" value="1"/>
</dbReference>
<dbReference type="InterPro" id="IPR053905">
    <property type="entry name" value="EF-G-like_DII"/>
</dbReference>
<dbReference type="InterPro" id="IPR044145">
    <property type="entry name" value="IF2_II"/>
</dbReference>
<dbReference type="InterPro" id="IPR006847">
    <property type="entry name" value="IF2_N"/>
</dbReference>
<dbReference type="InterPro" id="IPR027417">
    <property type="entry name" value="P-loop_NTPase"/>
</dbReference>
<dbReference type="InterPro" id="IPR005225">
    <property type="entry name" value="Small_GTP-bd"/>
</dbReference>
<dbReference type="InterPro" id="IPR000795">
    <property type="entry name" value="T_Tr_GTP-bd_dom"/>
</dbReference>
<dbReference type="InterPro" id="IPR000178">
    <property type="entry name" value="TF_IF2_bacterial-like"/>
</dbReference>
<dbReference type="InterPro" id="IPR015760">
    <property type="entry name" value="TIF_IF2"/>
</dbReference>
<dbReference type="InterPro" id="IPR023115">
    <property type="entry name" value="TIF_IF2_dom3"/>
</dbReference>
<dbReference type="InterPro" id="IPR036925">
    <property type="entry name" value="TIF_IF2_dom3_sf"/>
</dbReference>
<dbReference type="InterPro" id="IPR009000">
    <property type="entry name" value="Transl_B-barrel_sf"/>
</dbReference>
<dbReference type="NCBIfam" id="TIGR00487">
    <property type="entry name" value="IF-2"/>
    <property type="match status" value="1"/>
</dbReference>
<dbReference type="NCBIfam" id="TIGR00231">
    <property type="entry name" value="small_GTP"/>
    <property type="match status" value="1"/>
</dbReference>
<dbReference type="PANTHER" id="PTHR43381:SF5">
    <property type="entry name" value="TR-TYPE G DOMAIN-CONTAINING PROTEIN"/>
    <property type="match status" value="1"/>
</dbReference>
<dbReference type="PANTHER" id="PTHR43381">
    <property type="entry name" value="TRANSLATION INITIATION FACTOR IF-2-RELATED"/>
    <property type="match status" value="1"/>
</dbReference>
<dbReference type="Pfam" id="PF22042">
    <property type="entry name" value="EF-G_D2"/>
    <property type="match status" value="1"/>
</dbReference>
<dbReference type="Pfam" id="PF00009">
    <property type="entry name" value="GTP_EFTU"/>
    <property type="match status" value="1"/>
</dbReference>
<dbReference type="Pfam" id="PF11987">
    <property type="entry name" value="IF-2"/>
    <property type="match status" value="1"/>
</dbReference>
<dbReference type="Pfam" id="PF04760">
    <property type="entry name" value="IF2_N"/>
    <property type="match status" value="2"/>
</dbReference>
<dbReference type="PRINTS" id="PR00449">
    <property type="entry name" value="RASTRNSFRMNG"/>
</dbReference>
<dbReference type="SUPFAM" id="SSF52156">
    <property type="entry name" value="Initiation factor IF2/eIF5b, domain 3"/>
    <property type="match status" value="1"/>
</dbReference>
<dbReference type="SUPFAM" id="SSF52540">
    <property type="entry name" value="P-loop containing nucleoside triphosphate hydrolases"/>
    <property type="match status" value="1"/>
</dbReference>
<dbReference type="SUPFAM" id="SSF50447">
    <property type="entry name" value="Translation proteins"/>
    <property type="match status" value="2"/>
</dbReference>
<dbReference type="PROSITE" id="PS51722">
    <property type="entry name" value="G_TR_2"/>
    <property type="match status" value="1"/>
</dbReference>
<dbReference type="PROSITE" id="PS01176">
    <property type="entry name" value="IF2"/>
    <property type="match status" value="1"/>
</dbReference>
<evidence type="ECO:0000250" key="1"/>
<evidence type="ECO:0000255" key="2">
    <source>
        <dbReference type="HAMAP-Rule" id="MF_00100"/>
    </source>
</evidence>
<evidence type="ECO:0000256" key="3">
    <source>
        <dbReference type="SAM" id="MobiDB-lite"/>
    </source>
</evidence>
<feature type="chain" id="PRO_0000137262" description="Translation initiation factor IF-2">
    <location>
        <begin position="1"/>
        <end position="916"/>
    </location>
</feature>
<feature type="domain" description="tr-type G">
    <location>
        <begin position="418"/>
        <end position="585"/>
    </location>
</feature>
<feature type="region of interest" description="Disordered" evidence="3">
    <location>
        <begin position="55"/>
        <end position="324"/>
    </location>
</feature>
<feature type="region of interest" description="G1" evidence="1">
    <location>
        <begin position="427"/>
        <end position="434"/>
    </location>
</feature>
<feature type="region of interest" description="G2" evidence="1">
    <location>
        <begin position="452"/>
        <end position="456"/>
    </location>
</feature>
<feature type="region of interest" description="G3" evidence="1">
    <location>
        <begin position="473"/>
        <end position="476"/>
    </location>
</feature>
<feature type="region of interest" description="G4" evidence="1">
    <location>
        <begin position="527"/>
        <end position="530"/>
    </location>
</feature>
<feature type="region of interest" description="G5" evidence="1">
    <location>
        <begin position="563"/>
        <end position="565"/>
    </location>
</feature>
<feature type="compositionally biased region" description="Low complexity" evidence="3">
    <location>
        <begin position="77"/>
        <end position="88"/>
    </location>
</feature>
<feature type="compositionally biased region" description="Basic and acidic residues" evidence="3">
    <location>
        <begin position="98"/>
        <end position="121"/>
    </location>
</feature>
<feature type="compositionally biased region" description="Basic and acidic residues" evidence="3">
    <location>
        <begin position="129"/>
        <end position="161"/>
    </location>
</feature>
<feature type="compositionally biased region" description="Basic and acidic residues" evidence="3">
    <location>
        <begin position="198"/>
        <end position="212"/>
    </location>
</feature>
<feature type="compositionally biased region" description="Low complexity" evidence="3">
    <location>
        <begin position="227"/>
        <end position="250"/>
    </location>
</feature>
<feature type="compositionally biased region" description="Basic and acidic residues" evidence="3">
    <location>
        <begin position="264"/>
        <end position="281"/>
    </location>
</feature>
<feature type="compositionally biased region" description="Low complexity" evidence="3">
    <location>
        <begin position="291"/>
        <end position="304"/>
    </location>
</feature>
<feature type="compositionally biased region" description="Basic residues" evidence="3">
    <location>
        <begin position="305"/>
        <end position="314"/>
    </location>
</feature>
<feature type="binding site" evidence="2">
    <location>
        <begin position="427"/>
        <end position="434"/>
    </location>
    <ligand>
        <name>GTP</name>
        <dbReference type="ChEBI" id="CHEBI:37565"/>
    </ligand>
</feature>
<feature type="binding site" evidence="2">
    <location>
        <begin position="473"/>
        <end position="477"/>
    </location>
    <ligand>
        <name>GTP</name>
        <dbReference type="ChEBI" id="CHEBI:37565"/>
    </ligand>
</feature>
<feature type="binding site" evidence="2">
    <location>
        <begin position="527"/>
        <end position="530"/>
    </location>
    <ligand>
        <name>GTP</name>
        <dbReference type="ChEBI" id="CHEBI:37565"/>
    </ligand>
</feature>